<dbReference type="EC" id="3.5.1.108" evidence="1"/>
<dbReference type="EMBL" id="CP000720">
    <property type="protein sequence ID" value="ABS49439.1"/>
    <property type="molecule type" value="Genomic_DNA"/>
</dbReference>
<dbReference type="RefSeq" id="WP_002228285.1">
    <property type="nucleotide sequence ID" value="NC_009708.1"/>
</dbReference>
<dbReference type="SMR" id="A7FM60"/>
<dbReference type="GeneID" id="96664192"/>
<dbReference type="KEGG" id="ypi:YpsIP31758_3381"/>
<dbReference type="HOGENOM" id="CLU_046528_1_0_6"/>
<dbReference type="UniPathway" id="UPA00359">
    <property type="reaction ID" value="UER00478"/>
</dbReference>
<dbReference type="Proteomes" id="UP000002412">
    <property type="component" value="Chromosome"/>
</dbReference>
<dbReference type="GO" id="GO:0016020">
    <property type="term" value="C:membrane"/>
    <property type="evidence" value="ECO:0007669"/>
    <property type="project" value="GOC"/>
</dbReference>
<dbReference type="GO" id="GO:0046872">
    <property type="term" value="F:metal ion binding"/>
    <property type="evidence" value="ECO:0007669"/>
    <property type="project" value="UniProtKB-KW"/>
</dbReference>
<dbReference type="GO" id="GO:0103117">
    <property type="term" value="F:UDP-3-O-acyl-N-acetylglucosamine deacetylase activity"/>
    <property type="evidence" value="ECO:0007669"/>
    <property type="project" value="UniProtKB-UniRule"/>
</dbReference>
<dbReference type="GO" id="GO:0009245">
    <property type="term" value="P:lipid A biosynthetic process"/>
    <property type="evidence" value="ECO:0007669"/>
    <property type="project" value="UniProtKB-UniRule"/>
</dbReference>
<dbReference type="FunFam" id="3.30.1700.10:FF:000001">
    <property type="entry name" value="UDP-3-O-acyl-N-acetylglucosamine deacetylase"/>
    <property type="match status" value="1"/>
</dbReference>
<dbReference type="FunFam" id="3.30.230.20:FF:000001">
    <property type="entry name" value="UDP-3-O-acyl-N-acetylglucosamine deacetylase"/>
    <property type="match status" value="1"/>
</dbReference>
<dbReference type="Gene3D" id="3.30.230.20">
    <property type="entry name" value="lpxc deacetylase, domain 1"/>
    <property type="match status" value="1"/>
</dbReference>
<dbReference type="Gene3D" id="3.30.1700.10">
    <property type="entry name" value="lpxc deacetylase, domain 2"/>
    <property type="match status" value="1"/>
</dbReference>
<dbReference type="HAMAP" id="MF_00388">
    <property type="entry name" value="LpxC"/>
    <property type="match status" value="1"/>
</dbReference>
<dbReference type="InterPro" id="IPR020568">
    <property type="entry name" value="Ribosomal_Su5_D2-typ_SF"/>
</dbReference>
<dbReference type="InterPro" id="IPR004463">
    <property type="entry name" value="UDP-acyl_GlcNac_deAcase"/>
</dbReference>
<dbReference type="InterPro" id="IPR011334">
    <property type="entry name" value="UDP-acyl_GlcNac_deAcase_C"/>
</dbReference>
<dbReference type="InterPro" id="IPR015870">
    <property type="entry name" value="UDP-acyl_N-AcGlcN_deAcase_N"/>
</dbReference>
<dbReference type="NCBIfam" id="TIGR00325">
    <property type="entry name" value="lpxC"/>
    <property type="match status" value="1"/>
</dbReference>
<dbReference type="PANTHER" id="PTHR33694">
    <property type="entry name" value="UDP-3-O-ACYL-N-ACETYLGLUCOSAMINE DEACETYLASE 1, MITOCHONDRIAL-RELATED"/>
    <property type="match status" value="1"/>
</dbReference>
<dbReference type="PANTHER" id="PTHR33694:SF1">
    <property type="entry name" value="UDP-3-O-ACYL-N-ACETYLGLUCOSAMINE DEACETYLASE 1, MITOCHONDRIAL-RELATED"/>
    <property type="match status" value="1"/>
</dbReference>
<dbReference type="Pfam" id="PF03331">
    <property type="entry name" value="LpxC"/>
    <property type="match status" value="1"/>
</dbReference>
<dbReference type="SUPFAM" id="SSF54211">
    <property type="entry name" value="Ribosomal protein S5 domain 2-like"/>
    <property type="match status" value="2"/>
</dbReference>
<evidence type="ECO:0000255" key="1">
    <source>
        <dbReference type="HAMAP-Rule" id="MF_00388"/>
    </source>
</evidence>
<comment type="function">
    <text evidence="1">Catalyzes the hydrolysis of UDP-3-O-myristoyl-N-acetylglucosamine to form UDP-3-O-myristoylglucosamine and acetate, the committed step in lipid A biosynthesis.</text>
</comment>
<comment type="catalytic activity">
    <reaction evidence="1">
        <text>a UDP-3-O-[(3R)-3-hydroxyacyl]-N-acetyl-alpha-D-glucosamine + H2O = a UDP-3-O-[(3R)-3-hydroxyacyl]-alpha-D-glucosamine + acetate</text>
        <dbReference type="Rhea" id="RHEA:67816"/>
        <dbReference type="ChEBI" id="CHEBI:15377"/>
        <dbReference type="ChEBI" id="CHEBI:30089"/>
        <dbReference type="ChEBI" id="CHEBI:137740"/>
        <dbReference type="ChEBI" id="CHEBI:173225"/>
        <dbReference type="EC" id="3.5.1.108"/>
    </reaction>
</comment>
<comment type="cofactor">
    <cofactor evidence="1">
        <name>Zn(2+)</name>
        <dbReference type="ChEBI" id="CHEBI:29105"/>
    </cofactor>
</comment>
<comment type="pathway">
    <text evidence="1">Glycolipid biosynthesis; lipid IV(A) biosynthesis; lipid IV(A) from (3R)-3-hydroxytetradecanoyl-[acyl-carrier-protein] and UDP-N-acetyl-alpha-D-glucosamine: step 2/6.</text>
</comment>
<comment type="similarity">
    <text evidence="1">Belongs to the LpxC family.</text>
</comment>
<protein>
    <recommendedName>
        <fullName evidence="1">UDP-3-O-acyl-N-acetylglucosamine deacetylase</fullName>
        <shortName evidence="1">UDP-3-O-acyl-GlcNAc deacetylase</shortName>
        <ecNumber evidence="1">3.5.1.108</ecNumber>
    </recommendedName>
    <alternativeName>
        <fullName evidence="1">UDP-3-O-[R-3-hydroxymyristoyl]-N-acetylglucosamine deacetylase</fullName>
    </alternativeName>
</protein>
<name>LPXC_YERP3</name>
<feature type="chain" id="PRO_1000060740" description="UDP-3-O-acyl-N-acetylglucosamine deacetylase">
    <location>
        <begin position="1"/>
        <end position="306"/>
    </location>
</feature>
<feature type="active site" description="Proton donor" evidence="1">
    <location>
        <position position="265"/>
    </location>
</feature>
<feature type="binding site" evidence="1">
    <location>
        <position position="79"/>
    </location>
    <ligand>
        <name>Zn(2+)</name>
        <dbReference type="ChEBI" id="CHEBI:29105"/>
    </ligand>
</feature>
<feature type="binding site" evidence="1">
    <location>
        <position position="238"/>
    </location>
    <ligand>
        <name>Zn(2+)</name>
        <dbReference type="ChEBI" id="CHEBI:29105"/>
    </ligand>
</feature>
<feature type="binding site" evidence="1">
    <location>
        <position position="242"/>
    </location>
    <ligand>
        <name>Zn(2+)</name>
        <dbReference type="ChEBI" id="CHEBI:29105"/>
    </ligand>
</feature>
<organism>
    <name type="scientific">Yersinia pseudotuberculosis serotype O:1b (strain IP 31758)</name>
    <dbReference type="NCBI Taxonomy" id="349747"/>
    <lineage>
        <taxon>Bacteria</taxon>
        <taxon>Pseudomonadati</taxon>
        <taxon>Pseudomonadota</taxon>
        <taxon>Gammaproteobacteria</taxon>
        <taxon>Enterobacterales</taxon>
        <taxon>Yersiniaceae</taxon>
        <taxon>Yersinia</taxon>
    </lineage>
</organism>
<reference key="1">
    <citation type="journal article" date="2007" name="PLoS Genet.">
        <title>The complete genome sequence of Yersinia pseudotuberculosis IP31758, the causative agent of Far East scarlet-like fever.</title>
        <authorList>
            <person name="Eppinger M."/>
            <person name="Rosovitz M.J."/>
            <person name="Fricke W.F."/>
            <person name="Rasko D.A."/>
            <person name="Kokorina G."/>
            <person name="Fayolle C."/>
            <person name="Lindler L.E."/>
            <person name="Carniel E."/>
            <person name="Ravel J."/>
        </authorList>
    </citation>
    <scope>NUCLEOTIDE SEQUENCE [LARGE SCALE GENOMIC DNA]</scope>
    <source>
        <strain>IP 31758</strain>
    </source>
</reference>
<gene>
    <name evidence="1" type="primary">lpxC</name>
    <name type="ordered locus">YpsIP31758_3381</name>
</gene>
<sequence length="306" mass="34175">MIKQRTLKRIVQATGVGLHTGKKVTLTMRPAPANTGVIYRRTDLNPPVDFPADAKSVRDTMLCTCLVNEHDVRISTVEHLNAALAGLGIDNIIIEVNAPEVPIMDGSASPFVYLLLDAGIEELNSAKKFLRLKETVRVEDGDKWAELSPFNGFRLDFTIDFNHPAIDSSTQRYCLDFSADSFVRQISRARTFGFMRDIEYLQSRGLCLGGSFDCAIVVDDYRVLNEDGLRFEDEFVRHKMLDAIGDLFMCGHNIIGAFTAYKSGHALNNKLLQAVLAKQEAWEFVTFQDEAEMPLAFKAPSTVLAY</sequence>
<keyword id="KW-0378">Hydrolase</keyword>
<keyword id="KW-0441">Lipid A biosynthesis</keyword>
<keyword id="KW-0444">Lipid biosynthesis</keyword>
<keyword id="KW-0443">Lipid metabolism</keyword>
<keyword id="KW-0479">Metal-binding</keyword>
<keyword id="KW-0862">Zinc</keyword>
<proteinExistence type="inferred from homology"/>
<accession>A7FM60</accession>